<sequence length="124" mass="13424">MNNLLLVALGGSIGAVFRYLISIFMIQVFGSSFPFGTLLVNVLGSFLMGVIYALGQMSHISPELKALIGVGLLGALTTFSTFSNETLLLMQEGDWLKAALNVVLNLSLCLFMVYLGQQLVFSRI</sequence>
<accession>Q0HV56</accession>
<protein>
    <recommendedName>
        <fullName evidence="1">Fluoride-specific ion channel FluC</fullName>
    </recommendedName>
</protein>
<proteinExistence type="inferred from homology"/>
<organism>
    <name type="scientific">Shewanella sp. (strain MR-7)</name>
    <dbReference type="NCBI Taxonomy" id="60481"/>
    <lineage>
        <taxon>Bacteria</taxon>
        <taxon>Pseudomonadati</taxon>
        <taxon>Pseudomonadota</taxon>
        <taxon>Gammaproteobacteria</taxon>
        <taxon>Alteromonadales</taxon>
        <taxon>Shewanellaceae</taxon>
        <taxon>Shewanella</taxon>
    </lineage>
</organism>
<keyword id="KW-0997">Cell inner membrane</keyword>
<keyword id="KW-1003">Cell membrane</keyword>
<keyword id="KW-0407">Ion channel</keyword>
<keyword id="KW-0406">Ion transport</keyword>
<keyword id="KW-0472">Membrane</keyword>
<keyword id="KW-0479">Metal-binding</keyword>
<keyword id="KW-0915">Sodium</keyword>
<keyword id="KW-0812">Transmembrane</keyword>
<keyword id="KW-1133">Transmembrane helix</keyword>
<keyword id="KW-0813">Transport</keyword>
<feature type="chain" id="PRO_1000026421" description="Fluoride-specific ion channel FluC">
    <location>
        <begin position="1"/>
        <end position="124"/>
    </location>
</feature>
<feature type="transmembrane region" description="Helical" evidence="1">
    <location>
        <begin position="4"/>
        <end position="24"/>
    </location>
</feature>
<feature type="transmembrane region" description="Helical" evidence="1">
    <location>
        <begin position="35"/>
        <end position="55"/>
    </location>
</feature>
<feature type="transmembrane region" description="Helical" evidence="1">
    <location>
        <begin position="60"/>
        <end position="80"/>
    </location>
</feature>
<feature type="transmembrane region" description="Helical" evidence="1">
    <location>
        <begin position="102"/>
        <end position="122"/>
    </location>
</feature>
<feature type="binding site" evidence="1">
    <location>
        <position position="74"/>
    </location>
    <ligand>
        <name>Na(+)</name>
        <dbReference type="ChEBI" id="CHEBI:29101"/>
        <note>structural</note>
    </ligand>
</feature>
<feature type="binding site" evidence="1">
    <location>
        <position position="77"/>
    </location>
    <ligand>
        <name>Na(+)</name>
        <dbReference type="ChEBI" id="CHEBI:29101"/>
        <note>structural</note>
    </ligand>
</feature>
<evidence type="ECO:0000255" key="1">
    <source>
        <dbReference type="HAMAP-Rule" id="MF_00454"/>
    </source>
</evidence>
<gene>
    <name evidence="1" type="primary">fluC</name>
    <name evidence="1" type="synonym">crcB</name>
    <name type="ordered locus">Shewmr7_2010</name>
</gene>
<dbReference type="EMBL" id="CP000444">
    <property type="protein sequence ID" value="ABI42999.1"/>
    <property type="molecule type" value="Genomic_DNA"/>
</dbReference>
<dbReference type="SMR" id="Q0HV56"/>
<dbReference type="KEGG" id="shm:Shewmr7_2010"/>
<dbReference type="HOGENOM" id="CLU_114342_3_0_6"/>
<dbReference type="GO" id="GO:0005886">
    <property type="term" value="C:plasma membrane"/>
    <property type="evidence" value="ECO:0007669"/>
    <property type="project" value="UniProtKB-SubCell"/>
</dbReference>
<dbReference type="GO" id="GO:0062054">
    <property type="term" value="F:fluoride channel activity"/>
    <property type="evidence" value="ECO:0007669"/>
    <property type="project" value="UniProtKB-UniRule"/>
</dbReference>
<dbReference type="GO" id="GO:0046872">
    <property type="term" value="F:metal ion binding"/>
    <property type="evidence" value="ECO:0007669"/>
    <property type="project" value="UniProtKB-KW"/>
</dbReference>
<dbReference type="GO" id="GO:0140114">
    <property type="term" value="P:cellular detoxification of fluoride"/>
    <property type="evidence" value="ECO:0007669"/>
    <property type="project" value="UniProtKB-UniRule"/>
</dbReference>
<dbReference type="HAMAP" id="MF_00454">
    <property type="entry name" value="FluC"/>
    <property type="match status" value="1"/>
</dbReference>
<dbReference type="InterPro" id="IPR003691">
    <property type="entry name" value="FluC"/>
</dbReference>
<dbReference type="NCBIfam" id="TIGR00494">
    <property type="entry name" value="crcB"/>
    <property type="match status" value="1"/>
</dbReference>
<dbReference type="PANTHER" id="PTHR28259">
    <property type="entry name" value="FLUORIDE EXPORT PROTEIN 1-RELATED"/>
    <property type="match status" value="1"/>
</dbReference>
<dbReference type="PANTHER" id="PTHR28259:SF1">
    <property type="entry name" value="FLUORIDE EXPORT PROTEIN 1-RELATED"/>
    <property type="match status" value="1"/>
</dbReference>
<dbReference type="Pfam" id="PF02537">
    <property type="entry name" value="CRCB"/>
    <property type="match status" value="1"/>
</dbReference>
<comment type="function">
    <text evidence="1">Fluoride-specific ion channel. Important for reducing fluoride concentration in the cell, thus reducing its toxicity.</text>
</comment>
<comment type="catalytic activity">
    <reaction evidence="1">
        <text>fluoride(in) = fluoride(out)</text>
        <dbReference type="Rhea" id="RHEA:76159"/>
        <dbReference type="ChEBI" id="CHEBI:17051"/>
    </reaction>
    <physiologicalReaction direction="left-to-right" evidence="1">
        <dbReference type="Rhea" id="RHEA:76160"/>
    </physiologicalReaction>
</comment>
<comment type="activity regulation">
    <text evidence="1">Na(+) is not transported, but it plays an essential structural role and its presence is essential for fluoride channel function.</text>
</comment>
<comment type="subcellular location">
    <subcellularLocation>
        <location evidence="1">Cell inner membrane</location>
        <topology evidence="1">Multi-pass membrane protein</topology>
    </subcellularLocation>
</comment>
<comment type="similarity">
    <text evidence="1">Belongs to the fluoride channel Fluc/FEX (TC 1.A.43) family.</text>
</comment>
<reference key="1">
    <citation type="submission" date="2006-08" db="EMBL/GenBank/DDBJ databases">
        <title>Complete sequence of chromosome 1 of Shewanella sp. MR-7.</title>
        <authorList>
            <person name="Copeland A."/>
            <person name="Lucas S."/>
            <person name="Lapidus A."/>
            <person name="Barry K."/>
            <person name="Detter J.C."/>
            <person name="Glavina del Rio T."/>
            <person name="Hammon N."/>
            <person name="Israni S."/>
            <person name="Dalin E."/>
            <person name="Tice H."/>
            <person name="Pitluck S."/>
            <person name="Kiss H."/>
            <person name="Brettin T."/>
            <person name="Bruce D."/>
            <person name="Han C."/>
            <person name="Tapia R."/>
            <person name="Gilna P."/>
            <person name="Schmutz J."/>
            <person name="Larimer F."/>
            <person name="Land M."/>
            <person name="Hauser L."/>
            <person name="Kyrpides N."/>
            <person name="Mikhailova N."/>
            <person name="Nealson K."/>
            <person name="Konstantinidis K."/>
            <person name="Klappenbach J."/>
            <person name="Tiedje J."/>
            <person name="Richardson P."/>
        </authorList>
    </citation>
    <scope>NUCLEOTIDE SEQUENCE [LARGE SCALE GENOMIC DNA]</scope>
    <source>
        <strain>MR-7</strain>
    </source>
</reference>
<name>FLUC_SHESR</name>